<dbReference type="EC" id="2.1.1.199" evidence="1"/>
<dbReference type="EMBL" id="AM039952">
    <property type="protein sequence ID" value="CAJ22454.1"/>
    <property type="molecule type" value="Genomic_DNA"/>
</dbReference>
<dbReference type="SMR" id="Q3BXF9"/>
<dbReference type="STRING" id="456327.BJD11_18685"/>
<dbReference type="KEGG" id="xcv:XCV0823"/>
<dbReference type="eggNOG" id="COG0275">
    <property type="taxonomic scope" value="Bacteria"/>
</dbReference>
<dbReference type="HOGENOM" id="CLU_038422_2_0_6"/>
<dbReference type="Proteomes" id="UP000007069">
    <property type="component" value="Chromosome"/>
</dbReference>
<dbReference type="GO" id="GO:0005737">
    <property type="term" value="C:cytoplasm"/>
    <property type="evidence" value="ECO:0007669"/>
    <property type="project" value="UniProtKB-SubCell"/>
</dbReference>
<dbReference type="GO" id="GO:0071424">
    <property type="term" value="F:rRNA (cytosine-N4-)-methyltransferase activity"/>
    <property type="evidence" value="ECO:0007669"/>
    <property type="project" value="UniProtKB-UniRule"/>
</dbReference>
<dbReference type="GO" id="GO:0070475">
    <property type="term" value="P:rRNA base methylation"/>
    <property type="evidence" value="ECO:0007669"/>
    <property type="project" value="UniProtKB-UniRule"/>
</dbReference>
<dbReference type="FunFam" id="1.10.150.170:FF:000001">
    <property type="entry name" value="Ribosomal RNA small subunit methyltransferase H"/>
    <property type="match status" value="1"/>
</dbReference>
<dbReference type="Gene3D" id="1.10.150.170">
    <property type="entry name" value="Putative methyltransferase TM0872, insert domain"/>
    <property type="match status" value="1"/>
</dbReference>
<dbReference type="Gene3D" id="3.40.50.150">
    <property type="entry name" value="Vaccinia Virus protein VP39"/>
    <property type="match status" value="1"/>
</dbReference>
<dbReference type="HAMAP" id="MF_01007">
    <property type="entry name" value="16SrRNA_methyltr_H"/>
    <property type="match status" value="1"/>
</dbReference>
<dbReference type="InterPro" id="IPR002903">
    <property type="entry name" value="RsmH"/>
</dbReference>
<dbReference type="InterPro" id="IPR023397">
    <property type="entry name" value="SAM-dep_MeTrfase_MraW_recog"/>
</dbReference>
<dbReference type="InterPro" id="IPR029063">
    <property type="entry name" value="SAM-dependent_MTases_sf"/>
</dbReference>
<dbReference type="NCBIfam" id="TIGR00006">
    <property type="entry name" value="16S rRNA (cytosine(1402)-N(4))-methyltransferase RsmH"/>
    <property type="match status" value="1"/>
</dbReference>
<dbReference type="PANTHER" id="PTHR11265:SF0">
    <property type="entry name" value="12S RRNA N4-METHYLCYTIDINE METHYLTRANSFERASE"/>
    <property type="match status" value="1"/>
</dbReference>
<dbReference type="PANTHER" id="PTHR11265">
    <property type="entry name" value="S-ADENOSYL-METHYLTRANSFERASE MRAW"/>
    <property type="match status" value="1"/>
</dbReference>
<dbReference type="Pfam" id="PF01795">
    <property type="entry name" value="Methyltransf_5"/>
    <property type="match status" value="1"/>
</dbReference>
<dbReference type="PIRSF" id="PIRSF004486">
    <property type="entry name" value="MraW"/>
    <property type="match status" value="1"/>
</dbReference>
<dbReference type="SUPFAM" id="SSF81799">
    <property type="entry name" value="Putative methyltransferase TM0872, insert domain"/>
    <property type="match status" value="1"/>
</dbReference>
<dbReference type="SUPFAM" id="SSF53335">
    <property type="entry name" value="S-adenosyl-L-methionine-dependent methyltransferases"/>
    <property type="match status" value="1"/>
</dbReference>
<organism>
    <name type="scientific">Xanthomonas euvesicatoria pv. vesicatoria (strain 85-10)</name>
    <name type="common">Xanthomonas campestris pv. vesicatoria</name>
    <dbReference type="NCBI Taxonomy" id="316273"/>
    <lineage>
        <taxon>Bacteria</taxon>
        <taxon>Pseudomonadati</taxon>
        <taxon>Pseudomonadota</taxon>
        <taxon>Gammaproteobacteria</taxon>
        <taxon>Lysobacterales</taxon>
        <taxon>Lysobacteraceae</taxon>
        <taxon>Xanthomonas</taxon>
    </lineage>
</organism>
<reference key="1">
    <citation type="journal article" date="2005" name="J. Bacteriol.">
        <title>Insights into genome plasticity and pathogenicity of the plant pathogenic Bacterium Xanthomonas campestris pv. vesicatoria revealed by the complete genome sequence.</title>
        <authorList>
            <person name="Thieme F."/>
            <person name="Koebnik R."/>
            <person name="Bekel T."/>
            <person name="Berger C."/>
            <person name="Boch J."/>
            <person name="Buettner D."/>
            <person name="Caldana C."/>
            <person name="Gaigalat L."/>
            <person name="Goesmann A."/>
            <person name="Kay S."/>
            <person name="Kirchner O."/>
            <person name="Lanz C."/>
            <person name="Linke B."/>
            <person name="McHardy A.C."/>
            <person name="Meyer F."/>
            <person name="Mittenhuber G."/>
            <person name="Nies D.H."/>
            <person name="Niesbach-Kloesgen U."/>
            <person name="Patschkowski T."/>
            <person name="Rueckert C."/>
            <person name="Rupp O."/>
            <person name="Schneiker S."/>
            <person name="Schuster S.C."/>
            <person name="Vorhoelter F.J."/>
            <person name="Weber E."/>
            <person name="Puehler A."/>
            <person name="Bonas U."/>
            <person name="Bartels D."/>
            <person name="Kaiser O."/>
        </authorList>
    </citation>
    <scope>NUCLEOTIDE SEQUENCE [LARGE SCALE GENOMIC DNA]</scope>
    <source>
        <strain>85-10</strain>
    </source>
</reference>
<sequence>MSQPPAAHVPVLYTQVLDGLQVTENGTYLDGTFGRGGHARGVLEHLGPGGRLLVMDKDPEAIAVAEHSFGGDARVSIHRGSFAGLGQVVAAATVDGILLDLGVSSPQLDVAGRGFSFGKDGPLDMRMDPDNGQSAAQWLAQASEREIADVLWTYGEERQSRRIARAIVARRAEQPLLRTAQLADLIASVMPRGDSKTHPATRSFQAIRIHINRELADLEAGLDAALDALKPGGRLAVISFHSLEDRIVKQFMARYAKAPPSNRRLPEAQPFVPTLQLVSGAIKADDAELNVNPRARSAVLRVAEKLGVGIRNSGLEERSKRIPNPQSPIPASQGDAQ</sequence>
<proteinExistence type="inferred from homology"/>
<evidence type="ECO:0000255" key="1">
    <source>
        <dbReference type="HAMAP-Rule" id="MF_01007"/>
    </source>
</evidence>
<evidence type="ECO:0000256" key="2">
    <source>
        <dbReference type="SAM" id="MobiDB-lite"/>
    </source>
</evidence>
<feature type="chain" id="PRO_0000223573" description="Ribosomal RNA small subunit methyltransferase H">
    <location>
        <begin position="1"/>
        <end position="337"/>
    </location>
</feature>
<feature type="region of interest" description="Disordered" evidence="2">
    <location>
        <begin position="315"/>
        <end position="337"/>
    </location>
</feature>
<feature type="binding site" evidence="1">
    <location>
        <begin position="36"/>
        <end position="38"/>
    </location>
    <ligand>
        <name>S-adenosyl-L-methionine</name>
        <dbReference type="ChEBI" id="CHEBI:59789"/>
    </ligand>
</feature>
<feature type="binding site" evidence="1">
    <location>
        <position position="56"/>
    </location>
    <ligand>
        <name>S-adenosyl-L-methionine</name>
        <dbReference type="ChEBI" id="CHEBI:59789"/>
    </ligand>
</feature>
<feature type="binding site" evidence="1">
    <location>
        <position position="82"/>
    </location>
    <ligand>
        <name>S-adenosyl-L-methionine</name>
        <dbReference type="ChEBI" id="CHEBI:59789"/>
    </ligand>
</feature>
<feature type="binding site" evidence="1">
    <location>
        <position position="100"/>
    </location>
    <ligand>
        <name>S-adenosyl-L-methionine</name>
        <dbReference type="ChEBI" id="CHEBI:59789"/>
    </ligand>
</feature>
<feature type="binding site" evidence="1">
    <location>
        <position position="107"/>
    </location>
    <ligand>
        <name>S-adenosyl-L-methionine</name>
        <dbReference type="ChEBI" id="CHEBI:59789"/>
    </ligand>
</feature>
<comment type="function">
    <text evidence="1">Specifically methylates the N4 position of cytidine in position 1402 (C1402) of 16S rRNA.</text>
</comment>
<comment type="catalytic activity">
    <reaction evidence="1">
        <text>cytidine(1402) in 16S rRNA + S-adenosyl-L-methionine = N(4)-methylcytidine(1402) in 16S rRNA + S-adenosyl-L-homocysteine + H(+)</text>
        <dbReference type="Rhea" id="RHEA:42928"/>
        <dbReference type="Rhea" id="RHEA-COMP:10286"/>
        <dbReference type="Rhea" id="RHEA-COMP:10287"/>
        <dbReference type="ChEBI" id="CHEBI:15378"/>
        <dbReference type="ChEBI" id="CHEBI:57856"/>
        <dbReference type="ChEBI" id="CHEBI:59789"/>
        <dbReference type="ChEBI" id="CHEBI:74506"/>
        <dbReference type="ChEBI" id="CHEBI:82748"/>
        <dbReference type="EC" id="2.1.1.199"/>
    </reaction>
</comment>
<comment type="subcellular location">
    <subcellularLocation>
        <location evidence="1">Cytoplasm</location>
    </subcellularLocation>
</comment>
<comment type="similarity">
    <text evidence="1">Belongs to the methyltransferase superfamily. RsmH family.</text>
</comment>
<keyword id="KW-0963">Cytoplasm</keyword>
<keyword id="KW-0489">Methyltransferase</keyword>
<keyword id="KW-0698">rRNA processing</keyword>
<keyword id="KW-0949">S-adenosyl-L-methionine</keyword>
<keyword id="KW-0808">Transferase</keyword>
<accession>Q3BXF9</accession>
<gene>
    <name evidence="1" type="primary">rsmH</name>
    <name type="synonym">mraW</name>
    <name type="ordered locus">XCV0823</name>
</gene>
<name>RSMH_XANE5</name>
<protein>
    <recommendedName>
        <fullName evidence="1">Ribosomal RNA small subunit methyltransferase H</fullName>
        <ecNumber evidence="1">2.1.1.199</ecNumber>
    </recommendedName>
    <alternativeName>
        <fullName evidence="1">16S rRNA m(4)C1402 methyltransferase</fullName>
    </alternativeName>
    <alternativeName>
        <fullName evidence="1">rRNA (cytosine-N(4)-)-methyltransferase RsmH</fullName>
    </alternativeName>
</protein>